<proteinExistence type="inferred from homology"/>
<comment type="function">
    <text evidence="2 9">Sorting nexin, involved in the separation or division of vacuoles throughout the entire life cycle of the cells (By similarity). Involved in retrieval of late-Golgi SNAREs from post-Golgi endosomes to the trans-Golgi network, for cytoplasm to vacuole transport (Cvt), and autophagy of large cargos including mitophagy, pexophagy and glycophagy (By similarity). Required for invasion of the rice sheath (PubMed:35835849).</text>
</comment>
<comment type="subcellular location">
    <subcellularLocation>
        <location evidence="2">Cytoplasm</location>
        <location evidence="2">Cytosol</location>
    </subcellularLocation>
    <subcellularLocation>
        <location evidence="2">Preautophagosomal structure membrane</location>
        <topology evidence="2">Peripheral membrane protein</topology>
    </subcellularLocation>
    <subcellularLocation>
        <location evidence="2">Endosome membrane</location>
        <topology evidence="2">Peripheral membrane protein</topology>
    </subcellularLocation>
    <subcellularLocation>
        <location evidence="1">Mitochondrion membrane</location>
        <topology evidence="11">Peripheral membrane protein</topology>
    </subcellularLocation>
    <subcellularLocation>
        <location evidence="1">Lipid droplet</location>
    </subcellularLocation>
    <text evidence="2">Endosome and other perivacuolar punctate structures. Associates to phosphatidylinositol 3-phosphate, necessary for peripheral membrane localization to the perivacuolar punctate structures.</text>
</comment>
<comment type="domain">
    <text evidence="5">The PX domain binds phosphatidylinositol 3-phosphate which is necessary for peripheral membrane localization to the perivacuolar punctate structures.</text>
</comment>
<comment type="disruption phenotype">
    <text evidence="9">Decreases vegetative colony growth, invasive hyphae formation during infection, and virulence on rice.</text>
</comment>
<comment type="similarity">
    <text evidence="11">Belongs to the sorting nexin family.</text>
</comment>
<evidence type="ECO:0000250" key="1">
    <source>
        <dbReference type="UniProtKB" id="A0A1B7YDZ4"/>
    </source>
</evidence>
<evidence type="ECO:0000250" key="2">
    <source>
        <dbReference type="UniProtKB" id="P47057"/>
    </source>
</evidence>
<evidence type="ECO:0000250" key="3">
    <source>
        <dbReference type="UniProtKB" id="Q3UR97"/>
    </source>
</evidence>
<evidence type="ECO:0000250" key="4">
    <source>
        <dbReference type="UniProtKB" id="Q6P4T1"/>
    </source>
</evidence>
<evidence type="ECO:0000250" key="5">
    <source>
        <dbReference type="UniProtKB" id="Q96L94"/>
    </source>
</evidence>
<evidence type="ECO:0000255" key="6"/>
<evidence type="ECO:0000255" key="7">
    <source>
        <dbReference type="PROSITE-ProRule" id="PRU00147"/>
    </source>
</evidence>
<evidence type="ECO:0000256" key="8">
    <source>
        <dbReference type="SAM" id="MobiDB-lite"/>
    </source>
</evidence>
<evidence type="ECO:0000269" key="9">
    <source>
    </source>
</evidence>
<evidence type="ECO:0000303" key="10">
    <source>
    </source>
</evidence>
<evidence type="ECO:0000305" key="11"/>
<reference key="1">
    <citation type="journal article" date="2005" name="Nature">
        <title>The genome sequence of the rice blast fungus Magnaporthe grisea.</title>
        <authorList>
            <person name="Dean R.A."/>
            <person name="Talbot N.J."/>
            <person name="Ebbole D.J."/>
            <person name="Farman M.L."/>
            <person name="Mitchell T.K."/>
            <person name="Orbach M.J."/>
            <person name="Thon M.R."/>
            <person name="Kulkarni R."/>
            <person name="Xu J.-R."/>
            <person name="Pan H."/>
            <person name="Read N.D."/>
            <person name="Lee Y.-H."/>
            <person name="Carbone I."/>
            <person name="Brown D."/>
            <person name="Oh Y.Y."/>
            <person name="Donofrio N."/>
            <person name="Jeong J.S."/>
            <person name="Soanes D.M."/>
            <person name="Djonovic S."/>
            <person name="Kolomiets E."/>
            <person name="Rehmeyer C."/>
            <person name="Li W."/>
            <person name="Harding M."/>
            <person name="Kim S."/>
            <person name="Lebrun M.-H."/>
            <person name="Bohnert H."/>
            <person name="Coughlan S."/>
            <person name="Butler J."/>
            <person name="Calvo S.E."/>
            <person name="Ma L.-J."/>
            <person name="Nicol R."/>
            <person name="Purcell S."/>
            <person name="Nusbaum C."/>
            <person name="Galagan J.E."/>
            <person name="Birren B.W."/>
        </authorList>
    </citation>
    <scope>NUCLEOTIDE SEQUENCE [LARGE SCALE GENOMIC DNA]</scope>
    <source>
        <strain>70-15 / ATCC MYA-4617 / FGSC 8958</strain>
    </source>
</reference>
<reference key="2">
    <citation type="journal article" date="2022" name="Commun. Biol.">
        <title>Mitochondrial prohibitin complex regulates fungal virulence via ATG24-assisted mitophagy.</title>
        <authorList>
            <person name="Yan Y."/>
            <person name="Tang J."/>
            <person name="Yuan Q."/>
            <person name="Liu C."/>
            <person name="Chen X."/>
            <person name="Liu H."/>
            <person name="Huang J."/>
            <person name="Bao C."/>
            <person name="Hsiang T."/>
            <person name="Zheng L."/>
        </authorList>
    </citation>
    <scope>FUNCTION</scope>
    <scope>DISRUPTION PHENOTYPE</scope>
    <source>
        <strain evidence="10">P131</strain>
    </source>
</reference>
<accession>Q522W5</accession>
<accession>A4QRA1</accession>
<accession>G4N719</accession>
<sequence length="495" mass="55155">MGGIDQDNFSNISWQSDRLGAGSSAAHQHGGQESEQPTHNQAEPEPNYTSMIVHGMGLGDEVLECNVSSPLKENDGTKDAFVSYLVTTHTTFADFQKPDASVRRRFTDFVFLFKTLSREYPASAVPPLPDKQRMEYVRGDRFGNDFTSRRAYSLRRFLARCALHPVLRRSAILHTFLESPDWNATMRSRASRSVSMSGTSSGESGNAHYGGGSAGGGSTGGGNSLANSVFDNFADTFINAFTKVHKPDRRFIEVREKSDKLDEDLAHVEKVVARVSRRETDMEADHKDLAEQFQKLIVLEPGVEGPVRAFAASVEDTAQGLRGLREATEQDYLGSLRDLAAYSGALKNLLKAREQKQLDFEQLTEYLNKSSAERDVLASGGYSSGGALAGAGGFIRSKIEDVRGVDHEQSRRERLRKLELRIEELTVEVERAKKTSELFDEEVIREVSDFERIKRIELKRQFGSLAQSHTDFYDATIDVWEKYVKEMEKEGAVAA</sequence>
<protein>
    <recommendedName>
        <fullName>Sorting nexin-4</fullName>
    </recommendedName>
    <alternativeName>
        <fullName>Autophagy-related protein 24</fullName>
    </alternativeName>
</protein>
<keyword id="KW-0072">Autophagy</keyword>
<keyword id="KW-0175">Coiled coil</keyword>
<keyword id="KW-0963">Cytoplasm</keyword>
<keyword id="KW-0967">Endosome</keyword>
<keyword id="KW-0551">Lipid droplet</keyword>
<keyword id="KW-0446">Lipid-binding</keyword>
<keyword id="KW-0472">Membrane</keyword>
<keyword id="KW-0496">Mitochondrion</keyword>
<keyword id="KW-0653">Protein transport</keyword>
<keyword id="KW-1185">Reference proteome</keyword>
<keyword id="KW-0813">Transport</keyword>
<feature type="chain" id="PRO_0000213814" description="Sorting nexin-4">
    <location>
        <begin position="1"/>
        <end position="495"/>
    </location>
</feature>
<feature type="domain" description="PX" evidence="7">
    <location>
        <begin position="62"/>
        <end position="184"/>
    </location>
</feature>
<feature type="region of interest" description="Disordered" evidence="8">
    <location>
        <begin position="20"/>
        <end position="51"/>
    </location>
</feature>
<feature type="region of interest" description="Disordered" evidence="8">
    <location>
        <begin position="193"/>
        <end position="219"/>
    </location>
</feature>
<feature type="coiled-coil region" evidence="6">
    <location>
        <begin position="406"/>
        <end position="443"/>
    </location>
</feature>
<feature type="compositionally biased region" description="Low complexity" evidence="8">
    <location>
        <begin position="20"/>
        <end position="31"/>
    </location>
</feature>
<feature type="compositionally biased region" description="Low complexity" evidence="8">
    <location>
        <begin position="193"/>
        <end position="207"/>
    </location>
</feature>
<feature type="compositionally biased region" description="Gly residues" evidence="8">
    <location>
        <begin position="208"/>
        <end position="219"/>
    </location>
</feature>
<feature type="binding site" evidence="3">
    <location>
        <position position="105"/>
    </location>
    <ligand>
        <name>a 1,2-diacyl-sn-glycero-3-phospho-(1D-myo-inositol-3-phosphate)</name>
        <dbReference type="ChEBI" id="CHEBI:58088"/>
    </ligand>
</feature>
<feature type="binding site" evidence="3">
    <location>
        <position position="107"/>
    </location>
    <ligand>
        <name>a 1,2-diacyl-sn-glycero-3-phospho-(1D-myo-inositol-3-phosphate)</name>
        <dbReference type="ChEBI" id="CHEBI:58088"/>
    </ligand>
</feature>
<feature type="binding site" evidence="5">
    <location>
        <position position="131"/>
    </location>
    <ligand>
        <name>a 1,2-diacyl-sn-glycero-3-phospho-(1D-myo-inositol-3-phosphate)</name>
        <dbReference type="ChEBI" id="CHEBI:58088"/>
    </ligand>
</feature>
<feature type="binding site" evidence="4">
    <location>
        <position position="150"/>
    </location>
    <ligand>
        <name>a 1,2-diacyl-sn-glycero-3-phospho-(1D-myo-inositol-3-phosphate)</name>
        <dbReference type="ChEBI" id="CHEBI:58088"/>
    </ligand>
</feature>
<gene>
    <name type="primary">SNX4</name>
    <name type="synonym">ATG24</name>
    <name type="ORF">MGG_03638</name>
</gene>
<organism>
    <name type="scientific">Pyricularia oryzae (strain 70-15 / ATCC MYA-4617 / FGSC 8958)</name>
    <name type="common">Rice blast fungus</name>
    <name type="synonym">Magnaporthe oryzae</name>
    <dbReference type="NCBI Taxonomy" id="242507"/>
    <lineage>
        <taxon>Eukaryota</taxon>
        <taxon>Fungi</taxon>
        <taxon>Dikarya</taxon>
        <taxon>Ascomycota</taxon>
        <taxon>Pezizomycotina</taxon>
        <taxon>Sordariomycetes</taxon>
        <taxon>Sordariomycetidae</taxon>
        <taxon>Magnaporthales</taxon>
        <taxon>Pyriculariaceae</taxon>
        <taxon>Pyricularia</taxon>
    </lineage>
</organism>
<name>SNX4_PYRO7</name>
<dbReference type="EMBL" id="CM001234">
    <property type="protein sequence ID" value="EHA49932.1"/>
    <property type="molecule type" value="Genomic_DNA"/>
</dbReference>
<dbReference type="RefSeq" id="XP_003716251.1">
    <property type="nucleotide sequence ID" value="XM_003716203.1"/>
</dbReference>
<dbReference type="SMR" id="Q522W5"/>
<dbReference type="FunCoup" id="Q522W5">
    <property type="interactions" value="493"/>
</dbReference>
<dbReference type="STRING" id="242507.Q522W5"/>
<dbReference type="EnsemblFungi" id="MGG_03638T0">
    <property type="protein sequence ID" value="MGG_03638T0"/>
    <property type="gene ID" value="MGG_03638"/>
</dbReference>
<dbReference type="GeneID" id="2676514"/>
<dbReference type="KEGG" id="mgr:MGG_03638"/>
<dbReference type="VEuPathDB" id="FungiDB:MGG_03638"/>
<dbReference type="eggNOG" id="KOG2273">
    <property type="taxonomic scope" value="Eukaryota"/>
</dbReference>
<dbReference type="HOGENOM" id="CLU_027221_2_0_1"/>
<dbReference type="InParanoid" id="Q522W5"/>
<dbReference type="OMA" id="WSLHRFI"/>
<dbReference type="OrthoDB" id="205639at2759"/>
<dbReference type="PHI-base" id="PHI:2086"/>
<dbReference type="PHI-base" id="PHI:9303"/>
<dbReference type="Proteomes" id="UP000009058">
    <property type="component" value="Chromosome 4"/>
</dbReference>
<dbReference type="GO" id="GO:0005829">
    <property type="term" value="C:cytosol"/>
    <property type="evidence" value="ECO:0007669"/>
    <property type="project" value="UniProtKB-SubCell"/>
</dbReference>
<dbReference type="GO" id="GO:0005769">
    <property type="term" value="C:early endosome"/>
    <property type="evidence" value="ECO:0007669"/>
    <property type="project" value="TreeGrafter"/>
</dbReference>
<dbReference type="GO" id="GO:0010008">
    <property type="term" value="C:endosome membrane"/>
    <property type="evidence" value="ECO:0007669"/>
    <property type="project" value="UniProtKB-SubCell"/>
</dbReference>
<dbReference type="GO" id="GO:0005811">
    <property type="term" value="C:lipid droplet"/>
    <property type="evidence" value="ECO:0007669"/>
    <property type="project" value="UniProtKB-SubCell"/>
</dbReference>
<dbReference type="GO" id="GO:0031966">
    <property type="term" value="C:mitochondrial membrane"/>
    <property type="evidence" value="ECO:0007669"/>
    <property type="project" value="UniProtKB-SubCell"/>
</dbReference>
<dbReference type="GO" id="GO:0034045">
    <property type="term" value="C:phagophore assembly site membrane"/>
    <property type="evidence" value="ECO:0007669"/>
    <property type="project" value="UniProtKB-SubCell"/>
</dbReference>
<dbReference type="GO" id="GO:0035091">
    <property type="term" value="F:phosphatidylinositol binding"/>
    <property type="evidence" value="ECO:0007669"/>
    <property type="project" value="InterPro"/>
</dbReference>
<dbReference type="GO" id="GO:0000422">
    <property type="term" value="P:autophagy of mitochondrion"/>
    <property type="evidence" value="ECO:0007669"/>
    <property type="project" value="TreeGrafter"/>
</dbReference>
<dbReference type="GO" id="GO:0032456">
    <property type="term" value="P:endocytic recycling"/>
    <property type="evidence" value="ECO:0007669"/>
    <property type="project" value="TreeGrafter"/>
</dbReference>
<dbReference type="GO" id="GO:0034727">
    <property type="term" value="P:piecemeal microautophagy of the nucleus"/>
    <property type="evidence" value="ECO:0007669"/>
    <property type="project" value="TreeGrafter"/>
</dbReference>
<dbReference type="GO" id="GO:0015031">
    <property type="term" value="P:protein transport"/>
    <property type="evidence" value="ECO:0007669"/>
    <property type="project" value="UniProtKB-KW"/>
</dbReference>
<dbReference type="GO" id="GO:0061709">
    <property type="term" value="P:reticulophagy"/>
    <property type="evidence" value="ECO:0007669"/>
    <property type="project" value="TreeGrafter"/>
</dbReference>
<dbReference type="CDD" id="cd07628">
    <property type="entry name" value="BAR_Atg24p"/>
    <property type="match status" value="1"/>
</dbReference>
<dbReference type="CDD" id="cd06863">
    <property type="entry name" value="PX_Atg24p"/>
    <property type="match status" value="1"/>
</dbReference>
<dbReference type="FunFam" id="3.30.1520.10:FF:000035">
    <property type="entry name" value="Sorting nexin-4 protein"/>
    <property type="match status" value="1"/>
</dbReference>
<dbReference type="FunFam" id="1.20.1270.60:FF:000042">
    <property type="entry name" value="Vacuolar targeting protein Atg24"/>
    <property type="match status" value="1"/>
</dbReference>
<dbReference type="Gene3D" id="1.20.1270.60">
    <property type="entry name" value="Arfaptin homology (AH) domain/BAR domain"/>
    <property type="match status" value="1"/>
</dbReference>
<dbReference type="Gene3D" id="3.30.1520.10">
    <property type="entry name" value="Phox-like domain"/>
    <property type="match status" value="1"/>
</dbReference>
<dbReference type="InterPro" id="IPR027267">
    <property type="entry name" value="AH/BAR_dom_sf"/>
</dbReference>
<dbReference type="InterPro" id="IPR001683">
    <property type="entry name" value="PX_dom"/>
</dbReference>
<dbReference type="InterPro" id="IPR036871">
    <property type="entry name" value="PX_dom_sf"/>
</dbReference>
<dbReference type="PANTHER" id="PTHR45949">
    <property type="entry name" value="SORTING NEXIN-4"/>
    <property type="match status" value="1"/>
</dbReference>
<dbReference type="PANTHER" id="PTHR45949:SF2">
    <property type="entry name" value="SORTING NEXIN-4"/>
    <property type="match status" value="1"/>
</dbReference>
<dbReference type="Pfam" id="PF00787">
    <property type="entry name" value="PX"/>
    <property type="match status" value="1"/>
</dbReference>
<dbReference type="SMART" id="SM00312">
    <property type="entry name" value="PX"/>
    <property type="match status" value="1"/>
</dbReference>
<dbReference type="SUPFAM" id="SSF103657">
    <property type="entry name" value="BAR/IMD domain-like"/>
    <property type="match status" value="1"/>
</dbReference>
<dbReference type="SUPFAM" id="SSF64268">
    <property type="entry name" value="PX domain"/>
    <property type="match status" value="1"/>
</dbReference>
<dbReference type="PROSITE" id="PS50195">
    <property type="entry name" value="PX"/>
    <property type="match status" value="1"/>
</dbReference>